<reference key="1">
    <citation type="journal article" date="2006" name="Genome Res.">
        <title>Skewed genomic variability in strains of the toxigenic bacterial pathogen, Clostridium perfringens.</title>
        <authorList>
            <person name="Myers G.S.A."/>
            <person name="Rasko D.A."/>
            <person name="Cheung J.K."/>
            <person name="Ravel J."/>
            <person name="Seshadri R."/>
            <person name="DeBoy R.T."/>
            <person name="Ren Q."/>
            <person name="Varga J."/>
            <person name="Awad M.M."/>
            <person name="Brinkac L.M."/>
            <person name="Daugherty S.C."/>
            <person name="Haft D.H."/>
            <person name="Dodson R.J."/>
            <person name="Madupu R."/>
            <person name="Nelson W.C."/>
            <person name="Rosovitz M.J."/>
            <person name="Sullivan S.A."/>
            <person name="Khouri H."/>
            <person name="Dimitrov G.I."/>
            <person name="Watkins K.L."/>
            <person name="Mulligan S."/>
            <person name="Benton J."/>
            <person name="Radune D."/>
            <person name="Fisher D.J."/>
            <person name="Atkins H.S."/>
            <person name="Hiscox T."/>
            <person name="Jost B.H."/>
            <person name="Billington S.J."/>
            <person name="Songer J.G."/>
            <person name="McClane B.A."/>
            <person name="Titball R.W."/>
            <person name="Rood J.I."/>
            <person name="Melville S.B."/>
            <person name="Paulsen I.T."/>
        </authorList>
    </citation>
    <scope>NUCLEOTIDE SEQUENCE [LARGE SCALE GENOMIC DNA]</scope>
    <source>
        <strain>SM101 / Type A</strain>
    </source>
</reference>
<keyword id="KW-0066">ATP synthesis</keyword>
<keyword id="KW-0375">Hydrogen ion transport</keyword>
<keyword id="KW-0406">Ion transport</keyword>
<keyword id="KW-0813">Transport</keyword>
<comment type="function">
    <text evidence="1">Produces ATP from ADP in the presence of a proton gradient across the membrane.</text>
</comment>
<comment type="similarity">
    <text evidence="1">Belongs to the V-ATPase E subunit family.</text>
</comment>
<proteinExistence type="inferred from homology"/>
<protein>
    <recommendedName>
        <fullName>V-type ATP synthase subunit E</fullName>
    </recommendedName>
    <alternativeName>
        <fullName evidence="1">V-ATPase subunit E</fullName>
    </alternativeName>
</protein>
<sequence>MSNLNNLTSKILNDAEEKKKYILAEAEAQKDKIISKKTNRAEADKEEIITKANIEAEVKKARIISNAKLSVRNDMLRAKQDVISKVFNEAIEKLQNLSNGDYKYYVISTLDSLELEGTEVIIINEKDKDIFSNEFLEALNKELESKGKKGSITLNMEGKFNGGFILDRNGIQINNTFEALINSLRGELEFEVNKVLFD</sequence>
<organism>
    <name type="scientific">Clostridium perfringens (strain SM101 / Type A)</name>
    <dbReference type="NCBI Taxonomy" id="289380"/>
    <lineage>
        <taxon>Bacteria</taxon>
        <taxon>Bacillati</taxon>
        <taxon>Bacillota</taxon>
        <taxon>Clostridia</taxon>
        <taxon>Eubacteriales</taxon>
        <taxon>Clostridiaceae</taxon>
        <taxon>Clostridium</taxon>
    </lineage>
</organism>
<evidence type="ECO:0000255" key="1">
    <source>
        <dbReference type="HAMAP-Rule" id="MF_00311"/>
    </source>
</evidence>
<dbReference type="EMBL" id="CP000312">
    <property type="protein sequence ID" value="ABG87064.1"/>
    <property type="molecule type" value="Genomic_DNA"/>
</dbReference>
<dbReference type="RefSeq" id="WP_011592553.1">
    <property type="nucleotide sequence ID" value="NC_008262.1"/>
</dbReference>
<dbReference type="SMR" id="Q0SSH9"/>
<dbReference type="KEGG" id="cpr:CPR_1612"/>
<dbReference type="Proteomes" id="UP000001824">
    <property type="component" value="Chromosome"/>
</dbReference>
<dbReference type="GO" id="GO:0033178">
    <property type="term" value="C:proton-transporting two-sector ATPase complex, catalytic domain"/>
    <property type="evidence" value="ECO:0007669"/>
    <property type="project" value="InterPro"/>
</dbReference>
<dbReference type="GO" id="GO:0005524">
    <property type="term" value="F:ATP binding"/>
    <property type="evidence" value="ECO:0007669"/>
    <property type="project" value="UniProtKB-UniRule"/>
</dbReference>
<dbReference type="GO" id="GO:0046933">
    <property type="term" value="F:proton-transporting ATP synthase activity, rotational mechanism"/>
    <property type="evidence" value="ECO:0007669"/>
    <property type="project" value="UniProtKB-UniRule"/>
</dbReference>
<dbReference type="GO" id="GO:0046961">
    <property type="term" value="F:proton-transporting ATPase activity, rotational mechanism"/>
    <property type="evidence" value="ECO:0007669"/>
    <property type="project" value="InterPro"/>
</dbReference>
<dbReference type="GO" id="GO:0042777">
    <property type="term" value="P:proton motive force-driven plasma membrane ATP synthesis"/>
    <property type="evidence" value="ECO:0007669"/>
    <property type="project" value="UniProtKB-UniRule"/>
</dbReference>
<dbReference type="Gene3D" id="3.30.2320.30">
    <property type="entry name" value="ATP synthase, E subunit, C-terminal"/>
    <property type="match status" value="1"/>
</dbReference>
<dbReference type="Gene3D" id="1.20.5.620">
    <property type="entry name" value="F1F0 ATP synthase subunit B, membrane domain"/>
    <property type="match status" value="1"/>
</dbReference>
<dbReference type="HAMAP" id="MF_00311">
    <property type="entry name" value="ATP_synth_E_arch"/>
    <property type="match status" value="1"/>
</dbReference>
<dbReference type="InterPro" id="IPR038495">
    <property type="entry name" value="ATPase_E_C"/>
</dbReference>
<dbReference type="InterPro" id="IPR002842">
    <property type="entry name" value="ATPase_V1_Esu"/>
</dbReference>
<dbReference type="Pfam" id="PF01991">
    <property type="entry name" value="vATP-synt_E"/>
    <property type="match status" value="1"/>
</dbReference>
<dbReference type="SUPFAM" id="SSF160527">
    <property type="entry name" value="V-type ATPase subunit E-like"/>
    <property type="match status" value="1"/>
</dbReference>
<name>VATE_CLOPS</name>
<gene>
    <name evidence="1" type="primary">atpE</name>
    <name type="ordered locus">CPR_1612</name>
</gene>
<feature type="chain" id="PRO_0000322518" description="V-type ATP synthase subunit E">
    <location>
        <begin position="1"/>
        <end position="198"/>
    </location>
</feature>
<accession>Q0SSH9</accession>